<organism>
    <name type="scientific">Clostridium kluyveri (strain NBRC 12016)</name>
    <dbReference type="NCBI Taxonomy" id="583346"/>
    <lineage>
        <taxon>Bacteria</taxon>
        <taxon>Bacillati</taxon>
        <taxon>Bacillota</taxon>
        <taxon>Clostridia</taxon>
        <taxon>Eubacteriales</taxon>
        <taxon>Clostridiaceae</taxon>
        <taxon>Clostridium</taxon>
    </lineage>
</organism>
<accession>B9DYA6</accession>
<dbReference type="EMBL" id="AP009049">
    <property type="protein sequence ID" value="BAH05231.1"/>
    <property type="molecule type" value="Genomic_DNA"/>
</dbReference>
<dbReference type="RefSeq" id="WP_011988801.1">
    <property type="nucleotide sequence ID" value="NC_011837.1"/>
</dbReference>
<dbReference type="SMR" id="B9DYA6"/>
<dbReference type="KEGG" id="ckr:CKR_0180"/>
<dbReference type="HOGENOM" id="CLU_002794_4_1_9"/>
<dbReference type="Proteomes" id="UP000007969">
    <property type="component" value="Chromosome"/>
</dbReference>
<dbReference type="GO" id="GO:0005737">
    <property type="term" value="C:cytoplasm"/>
    <property type="evidence" value="ECO:0007669"/>
    <property type="project" value="UniProtKB-SubCell"/>
</dbReference>
<dbReference type="GO" id="GO:0005525">
    <property type="term" value="F:GTP binding"/>
    <property type="evidence" value="ECO:0007669"/>
    <property type="project" value="UniProtKB-UniRule"/>
</dbReference>
<dbReference type="GO" id="GO:0003924">
    <property type="term" value="F:GTPase activity"/>
    <property type="evidence" value="ECO:0007669"/>
    <property type="project" value="InterPro"/>
</dbReference>
<dbReference type="GO" id="GO:0003746">
    <property type="term" value="F:translation elongation factor activity"/>
    <property type="evidence" value="ECO:0007669"/>
    <property type="project" value="UniProtKB-UniRule"/>
</dbReference>
<dbReference type="GO" id="GO:0032790">
    <property type="term" value="P:ribosome disassembly"/>
    <property type="evidence" value="ECO:0007669"/>
    <property type="project" value="TreeGrafter"/>
</dbReference>
<dbReference type="CDD" id="cd01886">
    <property type="entry name" value="EF-G"/>
    <property type="match status" value="1"/>
</dbReference>
<dbReference type="CDD" id="cd16262">
    <property type="entry name" value="EFG_III"/>
    <property type="match status" value="1"/>
</dbReference>
<dbReference type="CDD" id="cd01434">
    <property type="entry name" value="EFG_mtEFG1_IV"/>
    <property type="match status" value="1"/>
</dbReference>
<dbReference type="CDD" id="cd03713">
    <property type="entry name" value="EFG_mtEFG_C"/>
    <property type="match status" value="1"/>
</dbReference>
<dbReference type="CDD" id="cd04088">
    <property type="entry name" value="EFG_mtEFG_II"/>
    <property type="match status" value="1"/>
</dbReference>
<dbReference type="FunFam" id="2.40.30.10:FF:000006">
    <property type="entry name" value="Elongation factor G"/>
    <property type="match status" value="1"/>
</dbReference>
<dbReference type="FunFam" id="3.30.230.10:FF:000003">
    <property type="entry name" value="Elongation factor G"/>
    <property type="match status" value="1"/>
</dbReference>
<dbReference type="FunFam" id="3.30.70.240:FF:000001">
    <property type="entry name" value="Elongation factor G"/>
    <property type="match status" value="1"/>
</dbReference>
<dbReference type="FunFam" id="3.30.70.870:FF:000001">
    <property type="entry name" value="Elongation factor G"/>
    <property type="match status" value="1"/>
</dbReference>
<dbReference type="FunFam" id="3.40.50.300:FF:000029">
    <property type="entry name" value="Elongation factor G"/>
    <property type="match status" value="1"/>
</dbReference>
<dbReference type="Gene3D" id="3.30.230.10">
    <property type="match status" value="1"/>
</dbReference>
<dbReference type="Gene3D" id="3.30.70.240">
    <property type="match status" value="1"/>
</dbReference>
<dbReference type="Gene3D" id="3.30.70.870">
    <property type="entry name" value="Elongation Factor G (Translational Gtpase), domain 3"/>
    <property type="match status" value="1"/>
</dbReference>
<dbReference type="Gene3D" id="3.40.50.300">
    <property type="entry name" value="P-loop containing nucleotide triphosphate hydrolases"/>
    <property type="match status" value="1"/>
</dbReference>
<dbReference type="Gene3D" id="2.40.30.10">
    <property type="entry name" value="Translation factors"/>
    <property type="match status" value="1"/>
</dbReference>
<dbReference type="HAMAP" id="MF_00054_B">
    <property type="entry name" value="EF_G_EF_2_B"/>
    <property type="match status" value="1"/>
</dbReference>
<dbReference type="InterPro" id="IPR041095">
    <property type="entry name" value="EFG_II"/>
</dbReference>
<dbReference type="InterPro" id="IPR009022">
    <property type="entry name" value="EFG_III"/>
</dbReference>
<dbReference type="InterPro" id="IPR035647">
    <property type="entry name" value="EFG_III/V"/>
</dbReference>
<dbReference type="InterPro" id="IPR047872">
    <property type="entry name" value="EFG_IV"/>
</dbReference>
<dbReference type="InterPro" id="IPR035649">
    <property type="entry name" value="EFG_V"/>
</dbReference>
<dbReference type="InterPro" id="IPR000640">
    <property type="entry name" value="EFG_V-like"/>
</dbReference>
<dbReference type="InterPro" id="IPR004161">
    <property type="entry name" value="EFTu-like_2"/>
</dbReference>
<dbReference type="InterPro" id="IPR031157">
    <property type="entry name" value="G_TR_CS"/>
</dbReference>
<dbReference type="InterPro" id="IPR027417">
    <property type="entry name" value="P-loop_NTPase"/>
</dbReference>
<dbReference type="InterPro" id="IPR020568">
    <property type="entry name" value="Ribosomal_Su5_D2-typ_SF"/>
</dbReference>
<dbReference type="InterPro" id="IPR014721">
    <property type="entry name" value="Ribsml_uS5_D2-typ_fold_subgr"/>
</dbReference>
<dbReference type="InterPro" id="IPR005225">
    <property type="entry name" value="Small_GTP-bd"/>
</dbReference>
<dbReference type="InterPro" id="IPR000795">
    <property type="entry name" value="T_Tr_GTP-bd_dom"/>
</dbReference>
<dbReference type="InterPro" id="IPR009000">
    <property type="entry name" value="Transl_B-barrel_sf"/>
</dbReference>
<dbReference type="InterPro" id="IPR004540">
    <property type="entry name" value="Transl_elong_EFG/EF2"/>
</dbReference>
<dbReference type="InterPro" id="IPR005517">
    <property type="entry name" value="Transl_elong_EFG/EF2_IV"/>
</dbReference>
<dbReference type="NCBIfam" id="TIGR00484">
    <property type="entry name" value="EF-G"/>
    <property type="match status" value="1"/>
</dbReference>
<dbReference type="NCBIfam" id="NF009379">
    <property type="entry name" value="PRK12740.1-3"/>
    <property type="match status" value="1"/>
</dbReference>
<dbReference type="NCBIfam" id="NF009381">
    <property type="entry name" value="PRK12740.1-5"/>
    <property type="match status" value="1"/>
</dbReference>
<dbReference type="NCBIfam" id="TIGR00231">
    <property type="entry name" value="small_GTP"/>
    <property type="match status" value="1"/>
</dbReference>
<dbReference type="PANTHER" id="PTHR43261:SF1">
    <property type="entry name" value="RIBOSOME-RELEASING FACTOR 2, MITOCHONDRIAL"/>
    <property type="match status" value="1"/>
</dbReference>
<dbReference type="PANTHER" id="PTHR43261">
    <property type="entry name" value="TRANSLATION ELONGATION FACTOR G-RELATED"/>
    <property type="match status" value="1"/>
</dbReference>
<dbReference type="Pfam" id="PF00679">
    <property type="entry name" value="EFG_C"/>
    <property type="match status" value="1"/>
</dbReference>
<dbReference type="Pfam" id="PF14492">
    <property type="entry name" value="EFG_III"/>
    <property type="match status" value="1"/>
</dbReference>
<dbReference type="Pfam" id="PF03764">
    <property type="entry name" value="EFG_IV"/>
    <property type="match status" value="1"/>
</dbReference>
<dbReference type="Pfam" id="PF00009">
    <property type="entry name" value="GTP_EFTU"/>
    <property type="match status" value="1"/>
</dbReference>
<dbReference type="Pfam" id="PF03144">
    <property type="entry name" value="GTP_EFTU_D2"/>
    <property type="match status" value="1"/>
</dbReference>
<dbReference type="PRINTS" id="PR00315">
    <property type="entry name" value="ELONGATNFCT"/>
</dbReference>
<dbReference type="SMART" id="SM00838">
    <property type="entry name" value="EFG_C"/>
    <property type="match status" value="1"/>
</dbReference>
<dbReference type="SMART" id="SM00889">
    <property type="entry name" value="EFG_IV"/>
    <property type="match status" value="1"/>
</dbReference>
<dbReference type="SUPFAM" id="SSF54980">
    <property type="entry name" value="EF-G C-terminal domain-like"/>
    <property type="match status" value="2"/>
</dbReference>
<dbReference type="SUPFAM" id="SSF52540">
    <property type="entry name" value="P-loop containing nucleoside triphosphate hydrolases"/>
    <property type="match status" value="1"/>
</dbReference>
<dbReference type="SUPFAM" id="SSF54211">
    <property type="entry name" value="Ribosomal protein S5 domain 2-like"/>
    <property type="match status" value="1"/>
</dbReference>
<dbReference type="SUPFAM" id="SSF50447">
    <property type="entry name" value="Translation proteins"/>
    <property type="match status" value="1"/>
</dbReference>
<dbReference type="PROSITE" id="PS00301">
    <property type="entry name" value="G_TR_1"/>
    <property type="match status" value="1"/>
</dbReference>
<dbReference type="PROSITE" id="PS51722">
    <property type="entry name" value="G_TR_2"/>
    <property type="match status" value="1"/>
</dbReference>
<feature type="chain" id="PRO_1000201451" description="Elongation factor G">
    <location>
        <begin position="1"/>
        <end position="688"/>
    </location>
</feature>
<feature type="domain" description="tr-type G">
    <location>
        <begin position="8"/>
        <end position="282"/>
    </location>
</feature>
<feature type="region of interest" description="Disordered" evidence="2">
    <location>
        <begin position="282"/>
        <end position="305"/>
    </location>
</feature>
<feature type="binding site" evidence="1">
    <location>
        <begin position="17"/>
        <end position="24"/>
    </location>
    <ligand>
        <name>GTP</name>
        <dbReference type="ChEBI" id="CHEBI:37565"/>
    </ligand>
</feature>
<feature type="binding site" evidence="1">
    <location>
        <begin position="81"/>
        <end position="85"/>
    </location>
    <ligand>
        <name>GTP</name>
        <dbReference type="ChEBI" id="CHEBI:37565"/>
    </ligand>
</feature>
<feature type="binding site" evidence="1">
    <location>
        <begin position="135"/>
        <end position="138"/>
    </location>
    <ligand>
        <name>GTP</name>
        <dbReference type="ChEBI" id="CHEBI:37565"/>
    </ligand>
</feature>
<evidence type="ECO:0000255" key="1">
    <source>
        <dbReference type="HAMAP-Rule" id="MF_00054"/>
    </source>
</evidence>
<evidence type="ECO:0000256" key="2">
    <source>
        <dbReference type="SAM" id="MobiDB-lite"/>
    </source>
</evidence>
<sequence>MGREYPLEKFRNIGIMAHIDAGKTTTTERILFYTGRTHKIGEVHEGQATMDWMAQEQERGITITSAATFCKWKGYAINIIDTPGHVDFTVEVERSLRVLDGAVTVLDAKSGVEPQTETVWRQADNYGVPRLVYVNKMDSTGADFYMCVNTLRDRLHCNAIPIQIPIGSESEFKGIVNLVKNEAIIYEDDLGTVMDEVEIPGDLKDEAEKYRTELIEAISELDEDIMMKYLEGEELTEEEIISAIRKGVISNKIVPVLCGSSYKNKGVQPMIDAVVDFMPSPLDIPPIKGTDPETGEETDRPADDNQPLSALAFKIATDPFVGKLAFTRIYSGIMKSGTYVYNSTKGKKERIARLVKMHSNRREEVDELRAGDLGAIVGLKDTTTGNTLCDEQNAVVLESMEFPEPVIHVAIEPKTKAGQEKMGIALSKLAEEDPTFKTHTDQETGQTIISGMGELHLEIIVDRLQREFKVECNVGKPQVAYKETIRKTVKAEGKFVRQSGGHGQYGHCWIEMSPSEEGYSFENAIVGGTIPKEYISPIDEGIKQASETGTVAGYPAINFKVKLYDGSYHDVDSSEMAFKIAASMAFKNAMSKADPVLLEPMMRVEVTVPEEYMGDVIGDINSRRGRIEGMDPRAGAQVIRSFVPLSEMFGYATVLRSRTQGRGVYSMTFDHYEEVPKSIQEKITGEKK</sequence>
<reference key="1">
    <citation type="submission" date="2005-09" db="EMBL/GenBank/DDBJ databases">
        <title>Complete genome sequence of Clostridium kluyveri and comparative genomics of Clostridia species.</title>
        <authorList>
            <person name="Inui M."/>
            <person name="Nonaka H."/>
            <person name="Shinoda Y."/>
            <person name="Ikenaga Y."/>
            <person name="Abe M."/>
            <person name="Naito K."/>
            <person name="Vertes A.A."/>
            <person name="Yukawa H."/>
        </authorList>
    </citation>
    <scope>NUCLEOTIDE SEQUENCE [LARGE SCALE GENOMIC DNA]</scope>
    <source>
        <strain>NBRC 12016</strain>
    </source>
</reference>
<gene>
    <name evidence="1" type="primary">fusA</name>
    <name type="ordered locus">CKR_0180</name>
</gene>
<comment type="function">
    <text evidence="1">Catalyzes the GTP-dependent ribosomal translocation step during translation elongation. During this step, the ribosome changes from the pre-translocational (PRE) to the post-translocational (POST) state as the newly formed A-site-bound peptidyl-tRNA and P-site-bound deacylated tRNA move to the P and E sites, respectively. Catalyzes the coordinated movement of the two tRNA molecules, the mRNA and conformational changes in the ribosome.</text>
</comment>
<comment type="subcellular location">
    <subcellularLocation>
        <location evidence="1">Cytoplasm</location>
    </subcellularLocation>
</comment>
<comment type="similarity">
    <text evidence="1">Belongs to the TRAFAC class translation factor GTPase superfamily. Classic translation factor GTPase family. EF-G/EF-2 subfamily.</text>
</comment>
<name>EFG_CLOK1</name>
<proteinExistence type="inferred from homology"/>
<keyword id="KW-0963">Cytoplasm</keyword>
<keyword id="KW-0251">Elongation factor</keyword>
<keyword id="KW-0342">GTP-binding</keyword>
<keyword id="KW-0547">Nucleotide-binding</keyword>
<keyword id="KW-0648">Protein biosynthesis</keyword>
<protein>
    <recommendedName>
        <fullName evidence="1">Elongation factor G</fullName>
        <shortName evidence="1">EF-G</shortName>
    </recommendedName>
</protein>